<keyword id="KW-0966">Cell projection</keyword>
<keyword id="KW-0969">Cilium</keyword>
<keyword id="KW-0970">Cilium biogenesis/degradation</keyword>
<keyword id="KW-0175">Coiled coil</keyword>
<keyword id="KW-0963">Cytoplasm</keyword>
<keyword id="KW-0968">Cytoplasmic vesicle</keyword>
<keyword id="KW-0206">Cytoskeleton</keyword>
<keyword id="KW-0967">Endosome</keyword>
<keyword id="KW-0378">Hydrolase</keyword>
<keyword id="KW-0488">Methylation</keyword>
<keyword id="KW-0539">Nucleus</keyword>
<keyword id="KW-0597">Phosphoprotein</keyword>
<keyword id="KW-0904">Protein phosphatase</keyword>
<keyword id="KW-0653">Protein transport</keyword>
<keyword id="KW-1185">Reference proteome</keyword>
<keyword id="KW-0677">Repeat</keyword>
<keyword id="KW-0802">TPR repeat</keyword>
<keyword id="KW-0813">Transport</keyword>
<reference key="1">
    <citation type="journal article" date="1998" name="J. Biol. Chem.">
        <title>A novel putative protein-tyrosine phosphatase contains a BRO1-like domain and suppresses Ha-ras-mediated transformation.</title>
        <authorList>
            <person name="Cao L."/>
            <person name="Zhang L."/>
            <person name="Ruiz-Lozano P."/>
            <person name="Yang Q."/>
            <person name="Chien K.R."/>
            <person name="Graham R.M."/>
            <person name="Zhou M."/>
        </authorList>
    </citation>
    <scope>NUCLEOTIDE SEQUENCE [MRNA]</scope>
    <scope>FUNCTION</scope>
    <scope>MUTAGENESIS OF CYS-1255</scope>
    <scope>SUBCELLULAR LOCATION</scope>
    <scope>TISSUE SPECIFICITY</scope>
    <source>
        <tissue>Brain</tissue>
    </source>
</reference>
<reference key="2">
    <citation type="submission" date="1999-08" db="EMBL/GenBank/DDBJ databases">
        <title>Corrections in cDNA sequence of the rat protein tyrosine phosphatase TD14 (PTP-TD14): identification of a base insertion and a base deletion in the sequence database.</title>
        <authorList>
            <person name="Nicolas G."/>
            <person name="Galand C."/>
            <person name="Malbert-Colas L."/>
            <person name="Lecomte M.-C."/>
        </authorList>
    </citation>
    <scope>NUCLEOTIDE SEQUENCE [MRNA] OF 1248-1499</scope>
    <source>
        <strain>Sprague-Dawley</strain>
        <tissue>Kidney</tissue>
    </source>
</reference>
<reference key="3">
    <citation type="journal article" date="2000" name="Biochem. Biophys. Res. Commun.">
        <title>HD-PTP: a novel protein tyrosine phosphatase gene on human chromosome 3p21.3.</title>
        <authorList>
            <person name="Toyooka S."/>
            <person name="Ouchida M."/>
            <person name="Jitsumori Y."/>
            <person name="Tsukuda K."/>
            <person name="Sakai A."/>
            <person name="Nakamura A."/>
            <person name="Shimizu N."/>
            <person name="Shimizu K."/>
        </authorList>
    </citation>
    <scope>TISSUE SPECIFICITY</scope>
</reference>
<reference key="4">
    <citation type="journal article" date="2012" name="Nat. Commun.">
        <title>Quantitative maps of protein phosphorylation sites across 14 different rat organs and tissues.</title>
        <authorList>
            <person name="Lundby A."/>
            <person name="Secher A."/>
            <person name="Lage K."/>
            <person name="Nordsborg N.B."/>
            <person name="Dmytriyev A."/>
            <person name="Lundby C."/>
            <person name="Olsen J.V."/>
        </authorList>
    </citation>
    <scope>IDENTIFICATION BY MASS SPECTROMETRY [LARGE SCALE ANALYSIS]</scope>
</reference>
<dbReference type="EC" id="3.1.3.48"/>
<dbReference type="EMBL" id="AF077000">
    <property type="protein sequence ID" value="AAC62959.1"/>
    <property type="status" value="ALT_SEQ"/>
    <property type="molecule type" value="mRNA"/>
</dbReference>
<dbReference type="EMBL" id="AF175208">
    <property type="protein sequence ID" value="AAF13172.1"/>
    <property type="molecule type" value="mRNA"/>
</dbReference>
<dbReference type="PIR" id="T14355">
    <property type="entry name" value="T14355"/>
</dbReference>
<dbReference type="SMR" id="O88902"/>
<dbReference type="FunCoup" id="O88902">
    <property type="interactions" value="3161"/>
</dbReference>
<dbReference type="STRING" id="10116.ENSRNOP00000052992"/>
<dbReference type="GlyGen" id="O88902">
    <property type="glycosylation" value="6 sites, 1 O-linked glycan (1 site)"/>
</dbReference>
<dbReference type="iPTMnet" id="O88902"/>
<dbReference type="PhosphoSitePlus" id="O88902"/>
<dbReference type="jPOST" id="O88902"/>
<dbReference type="PaxDb" id="10116-ENSRNOP00000052992"/>
<dbReference type="UCSC" id="RGD:619892">
    <property type="organism name" value="rat"/>
</dbReference>
<dbReference type="AGR" id="RGD:619892"/>
<dbReference type="RGD" id="619892">
    <property type="gene designation" value="Ptpn23"/>
</dbReference>
<dbReference type="eggNOG" id="KOG0789">
    <property type="taxonomic scope" value="Eukaryota"/>
</dbReference>
<dbReference type="eggNOG" id="KOG2220">
    <property type="taxonomic scope" value="Eukaryota"/>
</dbReference>
<dbReference type="InParanoid" id="O88902"/>
<dbReference type="PhylomeDB" id="O88902"/>
<dbReference type="Proteomes" id="UP000002494">
    <property type="component" value="Unplaced"/>
</dbReference>
<dbReference type="GO" id="GO:0036064">
    <property type="term" value="C:ciliary basal body"/>
    <property type="evidence" value="ECO:0000250"/>
    <property type="project" value="UniProtKB"/>
</dbReference>
<dbReference type="GO" id="GO:0005737">
    <property type="term" value="C:cytoplasm"/>
    <property type="evidence" value="ECO:0000250"/>
    <property type="project" value="UniProtKB"/>
</dbReference>
<dbReference type="GO" id="GO:0005769">
    <property type="term" value="C:early endosome"/>
    <property type="evidence" value="ECO:0000250"/>
    <property type="project" value="UniProtKB"/>
</dbReference>
<dbReference type="GO" id="GO:0005768">
    <property type="term" value="C:endosome"/>
    <property type="evidence" value="ECO:0000250"/>
    <property type="project" value="UniProtKB"/>
</dbReference>
<dbReference type="GO" id="GO:0005634">
    <property type="term" value="C:nucleus"/>
    <property type="evidence" value="ECO:0000250"/>
    <property type="project" value="UniProtKB"/>
</dbReference>
<dbReference type="GO" id="GO:0019901">
    <property type="term" value="F:protein kinase binding"/>
    <property type="evidence" value="ECO:0000266"/>
    <property type="project" value="RGD"/>
</dbReference>
<dbReference type="GO" id="GO:0004725">
    <property type="term" value="F:protein tyrosine phosphatase activity"/>
    <property type="evidence" value="ECO:0000266"/>
    <property type="project" value="RGD"/>
</dbReference>
<dbReference type="GO" id="GO:0060271">
    <property type="term" value="P:cilium assembly"/>
    <property type="evidence" value="ECO:0000250"/>
    <property type="project" value="UniProtKB"/>
</dbReference>
<dbReference type="GO" id="GO:0045022">
    <property type="term" value="P:early endosome to late endosome transport"/>
    <property type="evidence" value="ECO:0000266"/>
    <property type="project" value="RGD"/>
</dbReference>
<dbReference type="GO" id="GO:0032456">
    <property type="term" value="P:endocytic recycling"/>
    <property type="evidence" value="ECO:0000266"/>
    <property type="project" value="RGD"/>
</dbReference>
<dbReference type="GO" id="GO:0010633">
    <property type="term" value="P:negative regulation of epithelial cell migration"/>
    <property type="evidence" value="ECO:0000266"/>
    <property type="project" value="RGD"/>
</dbReference>
<dbReference type="GO" id="GO:1903393">
    <property type="term" value="P:positive regulation of adherens junction organization"/>
    <property type="evidence" value="ECO:0000266"/>
    <property type="project" value="RGD"/>
</dbReference>
<dbReference type="GO" id="GO:2000643">
    <property type="term" value="P:positive regulation of early endosome to late endosome transport"/>
    <property type="evidence" value="ECO:0000266"/>
    <property type="project" value="RGD"/>
</dbReference>
<dbReference type="GO" id="GO:1903387">
    <property type="term" value="P:positive regulation of homophilic cell adhesion"/>
    <property type="evidence" value="ECO:0000266"/>
    <property type="project" value="RGD"/>
</dbReference>
<dbReference type="GO" id="GO:0061357">
    <property type="term" value="P:positive regulation of Wnt protein secretion"/>
    <property type="evidence" value="ECO:0000266"/>
    <property type="project" value="RGD"/>
</dbReference>
<dbReference type="GO" id="GO:0043328">
    <property type="term" value="P:protein transport to vacuole involved in ubiquitin-dependent protein catabolic process via the multivesicular body sorting pathway"/>
    <property type="evidence" value="ECO:0000318"/>
    <property type="project" value="GO_Central"/>
</dbReference>
<dbReference type="GO" id="GO:0043162">
    <property type="term" value="P:ubiquitin-dependent protein catabolic process via the multivesicular body sorting pathway"/>
    <property type="evidence" value="ECO:0000250"/>
    <property type="project" value="UniProtKB"/>
</dbReference>
<dbReference type="CDD" id="cd14539">
    <property type="entry name" value="PTP-N23"/>
    <property type="match status" value="1"/>
</dbReference>
<dbReference type="CDD" id="cd09234">
    <property type="entry name" value="V_HD-PTP_like"/>
    <property type="match status" value="1"/>
</dbReference>
<dbReference type="FunFam" id="1.25.40.280:FF:000018">
    <property type="entry name" value="Tyrosine-protein phosphatase non-receptor type 23"/>
    <property type="match status" value="1"/>
</dbReference>
<dbReference type="FunFam" id="3.90.190.10:FF:000061">
    <property type="entry name" value="tyrosine-protein phosphatase non-receptor type 23 isoform X1"/>
    <property type="match status" value="1"/>
</dbReference>
<dbReference type="Gene3D" id="1.20.120.560">
    <property type="entry name" value="alix/aip1 in complex with the ypdl late domain"/>
    <property type="match status" value="1"/>
</dbReference>
<dbReference type="Gene3D" id="1.20.140.50">
    <property type="entry name" value="alix/aip1 like domains"/>
    <property type="match status" value="1"/>
</dbReference>
<dbReference type="Gene3D" id="1.25.40.280">
    <property type="entry name" value="alix/aip1 like domains"/>
    <property type="match status" value="1"/>
</dbReference>
<dbReference type="Gene3D" id="3.90.190.10">
    <property type="entry name" value="Protein tyrosine phosphatase superfamily"/>
    <property type="match status" value="1"/>
</dbReference>
<dbReference type="InterPro" id="IPR025304">
    <property type="entry name" value="ALIX_V_dom"/>
</dbReference>
<dbReference type="InterPro" id="IPR004328">
    <property type="entry name" value="BRO1_dom"/>
</dbReference>
<dbReference type="InterPro" id="IPR038499">
    <property type="entry name" value="BRO1_sf"/>
</dbReference>
<dbReference type="InterPro" id="IPR029021">
    <property type="entry name" value="Prot-tyrosine_phosphatase-like"/>
</dbReference>
<dbReference type="InterPro" id="IPR000242">
    <property type="entry name" value="PTP_cat"/>
</dbReference>
<dbReference type="InterPro" id="IPR016130">
    <property type="entry name" value="Tyr_Pase_AS"/>
</dbReference>
<dbReference type="InterPro" id="IPR003595">
    <property type="entry name" value="Tyr_Pase_cat"/>
</dbReference>
<dbReference type="InterPro" id="IPR000387">
    <property type="entry name" value="Tyr_Pase_dom"/>
</dbReference>
<dbReference type="PANTHER" id="PTHR23030">
    <property type="entry name" value="PCD6 INTERACTING PROTEIN-RELATED"/>
    <property type="match status" value="1"/>
</dbReference>
<dbReference type="PANTHER" id="PTHR23030:SF30">
    <property type="entry name" value="TYROSINE-PROTEIN PHOSPHATASE NON-RECEPTOR TYPE 23"/>
    <property type="match status" value="1"/>
</dbReference>
<dbReference type="Pfam" id="PF13949">
    <property type="entry name" value="ALIX_LYPXL_bnd"/>
    <property type="match status" value="1"/>
</dbReference>
<dbReference type="Pfam" id="PF03097">
    <property type="entry name" value="BRO1"/>
    <property type="match status" value="1"/>
</dbReference>
<dbReference type="Pfam" id="PF00102">
    <property type="entry name" value="Y_phosphatase"/>
    <property type="match status" value="1"/>
</dbReference>
<dbReference type="PRINTS" id="PR00700">
    <property type="entry name" value="PRTYPHPHTASE"/>
</dbReference>
<dbReference type="SMART" id="SM01041">
    <property type="entry name" value="BRO1"/>
    <property type="match status" value="1"/>
</dbReference>
<dbReference type="SMART" id="SM00194">
    <property type="entry name" value="PTPc"/>
    <property type="match status" value="1"/>
</dbReference>
<dbReference type="SMART" id="SM00404">
    <property type="entry name" value="PTPc_motif"/>
    <property type="match status" value="1"/>
</dbReference>
<dbReference type="SUPFAM" id="SSF52799">
    <property type="entry name" value="(Phosphotyrosine protein) phosphatases II"/>
    <property type="match status" value="1"/>
</dbReference>
<dbReference type="PROSITE" id="PS51180">
    <property type="entry name" value="BRO1"/>
    <property type="match status" value="1"/>
</dbReference>
<dbReference type="PROSITE" id="PS00383">
    <property type="entry name" value="TYR_PHOSPHATASE_1"/>
    <property type="match status" value="1"/>
</dbReference>
<dbReference type="PROSITE" id="PS50056">
    <property type="entry name" value="TYR_PHOSPHATASE_2"/>
    <property type="match status" value="1"/>
</dbReference>
<dbReference type="PROSITE" id="PS50055">
    <property type="entry name" value="TYR_PHOSPHATASE_PTP"/>
    <property type="match status" value="1"/>
</dbReference>
<organism>
    <name type="scientific">Rattus norvegicus</name>
    <name type="common">Rat</name>
    <dbReference type="NCBI Taxonomy" id="10116"/>
    <lineage>
        <taxon>Eukaryota</taxon>
        <taxon>Metazoa</taxon>
        <taxon>Chordata</taxon>
        <taxon>Craniata</taxon>
        <taxon>Vertebrata</taxon>
        <taxon>Euteleostomi</taxon>
        <taxon>Mammalia</taxon>
        <taxon>Eutheria</taxon>
        <taxon>Euarchontoglires</taxon>
        <taxon>Glires</taxon>
        <taxon>Rodentia</taxon>
        <taxon>Myomorpha</taxon>
        <taxon>Muroidea</taxon>
        <taxon>Muridae</taxon>
        <taxon>Murinae</taxon>
        <taxon>Rattus</taxon>
    </lineage>
</organism>
<evidence type="ECO:0000250" key="1"/>
<evidence type="ECO:0000250" key="2">
    <source>
        <dbReference type="UniProtKB" id="Q9H3S7"/>
    </source>
</evidence>
<evidence type="ECO:0000255" key="3"/>
<evidence type="ECO:0000255" key="4">
    <source>
        <dbReference type="PROSITE-ProRule" id="PRU00160"/>
    </source>
</evidence>
<evidence type="ECO:0000255" key="5">
    <source>
        <dbReference type="PROSITE-ProRule" id="PRU00526"/>
    </source>
</evidence>
<evidence type="ECO:0000255" key="6">
    <source>
        <dbReference type="PROSITE-ProRule" id="PRU10044"/>
    </source>
</evidence>
<evidence type="ECO:0000256" key="7">
    <source>
        <dbReference type="SAM" id="MobiDB-lite"/>
    </source>
</evidence>
<evidence type="ECO:0000269" key="8">
    <source>
    </source>
</evidence>
<evidence type="ECO:0000269" key="9">
    <source>
    </source>
</evidence>
<evidence type="ECO:0000305" key="10"/>
<proteinExistence type="evidence at protein level"/>
<feature type="chain" id="PRO_0000094779" description="Tyrosine-protein phosphatase non-receptor type 23">
    <location>
        <begin position="1" status="less than"/>
        <end position="1499"/>
    </location>
</feature>
<feature type="domain" description="BRO1" evidence="5">
    <location>
        <begin position="1"/>
        <end position="219"/>
    </location>
</feature>
<feature type="repeat" description="TPR 1">
    <location>
        <begin position="75"/>
        <end position="108"/>
    </location>
</feature>
<feature type="repeat" description="TPR 2">
    <location>
        <begin position="199"/>
        <end position="232"/>
    </location>
</feature>
<feature type="repeat" description="1">
    <location>
        <begin position="788"/>
        <end position="789"/>
    </location>
</feature>
<feature type="repeat" description="2">
    <location>
        <begin position="790"/>
        <end position="791"/>
    </location>
</feature>
<feature type="repeat" description="3">
    <location>
        <begin position="792"/>
        <end position="793"/>
    </location>
</feature>
<feature type="repeat" description="4">
    <location>
        <begin position="794"/>
        <end position="795"/>
    </location>
</feature>
<feature type="repeat" description="5">
    <location>
        <begin position="796"/>
        <end position="797"/>
    </location>
</feature>
<feature type="repeat" description="6">
    <location>
        <begin position="798"/>
        <end position="799"/>
    </location>
</feature>
<feature type="repeat" description="7">
    <location>
        <begin position="800"/>
        <end position="801"/>
    </location>
</feature>
<feature type="repeat" description="8">
    <location>
        <begin position="802"/>
        <end position="803"/>
    </location>
</feature>
<feature type="repeat" description="9">
    <location>
        <begin position="804"/>
        <end position="805"/>
    </location>
</feature>
<feature type="repeat" description="10">
    <location>
        <begin position="806"/>
        <end position="807"/>
    </location>
</feature>
<feature type="repeat" description="11">
    <location>
        <begin position="808"/>
        <end position="809"/>
    </location>
</feature>
<feature type="repeat" description="12">
    <location>
        <begin position="810"/>
        <end position="811"/>
    </location>
</feature>
<feature type="repeat" description="13">
    <location>
        <begin position="812"/>
        <end position="813"/>
    </location>
</feature>
<feature type="repeat" description="14">
    <location>
        <begin position="814"/>
        <end position="815"/>
    </location>
</feature>
<feature type="repeat" description="15">
    <location>
        <begin position="816"/>
        <end position="817"/>
    </location>
</feature>
<feature type="repeat" description="16">
    <location>
        <begin position="818"/>
        <end position="819"/>
    </location>
</feature>
<feature type="repeat" description="17">
    <location>
        <begin position="820"/>
        <end position="821"/>
    </location>
</feature>
<feature type="repeat" description="18">
    <location>
        <begin position="822"/>
        <end position="823"/>
    </location>
</feature>
<feature type="repeat" description="19">
    <location>
        <begin position="824"/>
        <end position="825"/>
    </location>
</feature>
<feature type="repeat" description="20">
    <location>
        <begin position="826"/>
        <end position="827"/>
    </location>
</feature>
<feature type="domain" description="Tyrosine-protein phosphatase" evidence="4">
    <location>
        <begin position="1055"/>
        <end position="1315"/>
    </location>
</feature>
<feature type="region of interest" description="Disordered" evidence="7">
    <location>
        <begin position="536"/>
        <end position="583"/>
    </location>
</feature>
<feature type="region of interest" description="His">
    <location>
        <begin position="598"/>
        <end position="993"/>
    </location>
</feature>
<feature type="region of interest" description="Disordered" evidence="7">
    <location>
        <begin position="718"/>
        <end position="1006"/>
    </location>
</feature>
<feature type="region of interest" description="20 X 2 AA approximate tandem repeats of P-Q">
    <location>
        <begin position="788"/>
        <end position="827"/>
    </location>
</feature>
<feature type="region of interest" description="Disordered" evidence="7">
    <location>
        <begin position="1322"/>
        <end position="1351"/>
    </location>
</feature>
<feature type="region of interest" description="Disordered" evidence="7">
    <location>
        <begin position="1381"/>
        <end position="1499"/>
    </location>
</feature>
<feature type="coiled-coil region" evidence="3">
    <location>
        <begin position="278"/>
        <end position="305"/>
    </location>
</feature>
<feature type="coiled-coil region" evidence="3">
    <location>
        <begin position="377"/>
        <end position="464"/>
    </location>
</feature>
<feature type="coiled-coil region" evidence="3">
    <location>
        <begin position="506"/>
        <end position="537"/>
    </location>
</feature>
<feature type="compositionally biased region" description="Pro residues" evidence="7">
    <location>
        <begin position="724"/>
        <end position="752"/>
    </location>
</feature>
<feature type="compositionally biased region" description="Polar residues" evidence="7">
    <location>
        <begin position="754"/>
        <end position="763"/>
    </location>
</feature>
<feature type="compositionally biased region" description="Pro residues" evidence="7">
    <location>
        <begin position="785"/>
        <end position="827"/>
    </location>
</feature>
<feature type="compositionally biased region" description="Pro residues" evidence="7">
    <location>
        <begin position="856"/>
        <end position="866"/>
    </location>
</feature>
<feature type="compositionally biased region" description="Pro residues" evidence="7">
    <location>
        <begin position="900"/>
        <end position="909"/>
    </location>
</feature>
<feature type="compositionally biased region" description="Pro residues" evidence="7">
    <location>
        <begin position="934"/>
        <end position="972"/>
    </location>
</feature>
<feature type="compositionally biased region" description="Polar residues" evidence="7">
    <location>
        <begin position="1335"/>
        <end position="1348"/>
    </location>
</feature>
<feature type="compositionally biased region" description="Pro residues" evidence="7">
    <location>
        <begin position="1390"/>
        <end position="1419"/>
    </location>
</feature>
<feature type="compositionally biased region" description="Low complexity" evidence="7">
    <location>
        <begin position="1427"/>
        <end position="1450"/>
    </location>
</feature>
<feature type="compositionally biased region" description="Polar residues" evidence="7">
    <location>
        <begin position="1464"/>
        <end position="1473"/>
    </location>
</feature>
<feature type="compositionally biased region" description="Low complexity" evidence="7">
    <location>
        <begin position="1482"/>
        <end position="1499"/>
    </location>
</feature>
<feature type="active site" description="Phosphocysteine intermediate" evidence="10">
    <location>
        <position position="1255"/>
    </location>
</feature>
<feature type="modified residue" description="Omega-N-methylarginine" evidence="2">
    <location>
        <position position="785"/>
    </location>
</feature>
<feature type="modified residue" description="Phosphoserine" evidence="2">
    <location>
        <position position="985"/>
    </location>
</feature>
<feature type="modified residue" description="Phosphoserine" evidence="2">
    <location>
        <position position="986"/>
    </location>
</feature>
<feature type="modified residue" description="Phosphothreonine" evidence="2">
    <location>
        <position position="994"/>
    </location>
</feature>
<feature type="modified residue" description="Omega-N-methylarginine" evidence="2">
    <location>
        <position position="1478"/>
    </location>
</feature>
<feature type="mutagenesis site" description="Abolishes suppressive effect on Ha-ras induced transformation." evidence="9">
    <original>C</original>
    <variation>S</variation>
    <location>
        <position position="1255"/>
    </location>
</feature>
<feature type="sequence conflict" description="In Ref. 2; AAF13172." evidence="10" ref="2">
    <original>R</original>
    <variation>G</variation>
    <location>
        <position position="1280"/>
    </location>
</feature>
<feature type="non-terminal residue">
    <location>
        <position position="1"/>
    </location>
</feature>
<gene>
    <name type="primary">Ptpn23</name>
</gene>
<accession>O88902</accession>
<accession>Q9QZP8</accession>
<protein>
    <recommendedName>
        <fullName>Tyrosine-protein phosphatase non-receptor type 23</fullName>
        <ecNumber>3.1.3.48</ecNumber>
    </recommendedName>
    <alternativeName>
        <fullName>His domain-containing protein tyrosine phosphatase</fullName>
        <shortName>HD-PTP</shortName>
    </alternativeName>
    <alternativeName>
        <fullName>Protein tyrosine phosphatase TD14</fullName>
        <shortName>PTP-TD14</shortName>
    </alternativeName>
</protein>
<sequence>LNVNLMLGQAQECLLEKSMLDNRKSFLVARISAQVVDYYKEACRALENPDTASLLGRIQKDWKKLVQMKIYYFAAVAHLHMGKQAEEQQKFGERVAYFQSALDKLNEAIKLAKGQPDTVQDALRFAMDVIGGKYNSAKKDNDFIYHEAVPALDTLQPVKGAPLVKPLPVNPTDPAVTGPDIFAKLVPMAAHEASSLYSEEKAKLLREMLAKIEDKNEVLDQFMDSMQLDPDTVDNLDAYNHIPPQLMEKCAALSVRPDTVKNLVQSMQVLSGVFTDVEASLKDIRDLLEEDELQEQKLQETLGQAGAGPGPSVTKAELGEVRREWAKYTEVHEKASFTNSELHRAMNLHVGNLRLLSGPLDQVRAALPTPALTPEDKAVLQNLKRILAKVQEMRDQRVSLEQQLRELIQKDDITASLVTTDHSEMKKLFEEQLKKYDQLKVYLEQNLAAQDNVLRALTEANVQYAAVRRVLSELDQKWNSTLQTLVASYEAYEDLMKKSQEGKDFYADLESKVAALLERAQSLCRAQEAARQQLLDRELKKKAPPPRPTAPKPLLSRREEGEAAEAGDQPEELRSLPPDMMAGPRLPDPFLGTAAPLHFSPGPFPGSTGPATHYLSGPLPPGTYSGPTQLMQPRAAVPMAPGPVLYPAPVYTSELGLVPRSSPQHGIVSSPYAGVGPPQPIVGLPSAPPPQFSGPELAMDVRPATTTVDSVQAPISSHMALRPGPAPAPPQPCFPVPQPVPQSVPQPQPLPTPYTYSIGTKQHLTGPLPQHHFPPGIPTSFPAPRIGPQPPPQLQPQPQPQPQPQPPPQPQPQPQPQPQPQPQPQPQRPVFGPQPTQQPLPFQHPHLFPSQAPGILTPPPPYPFTPQPGVLGQPPPTRHTQLYPGPPPDTLPPHSGALPFPSPGPPHPHPTLAYGPAPSPRPLGPQATPVSIRGPPPANQPAPSPHLVPSPAPSPGPGPVPSRPPTAEPPPCLRRGAAAADLLSSSPESQHGGTQPPGGGQPLLQPTKVDAAERPTAQALRLIEQDPYEHPERLQKLQQELESFRGQLGDAGALDAVWRELQEAQEHDARGRSIAIARCYSLKNRHQDVMPYDSNRVVLRSGKDDYINASCVEGLSPYCPPLVATQRPLPGTAADFWLMVHEQKVSVIVMLVSEAEMEKQKVARYFPIERGQPMVHGALSVALSSVRTTDTHVERVLSLQFRDQSLKRSLVHLHFPTWPELGLPDSPGNLLRFIQEVHAHYLHQRPLHTPIVVHCSSGVGRTGAFALLYAAVQEVEAGSRIPELPQLVRRMRQQRKHMLQEKLHLKFCHEALVRHVEQVLQRHGVPPPGKPVASMSVSQKSHLPQDSQDLVLGGDVPISSIQATIAKLSIRPLGGLDSPAASLPSLVEPPGLPPASLPEPTPAPPSSPPPPSSPLPEPPQPEEEPSVPEAPSLGPPSSSLELLASLTPEAFSLDSSLRGKQRMSKQNFLQAHNGQGLRAAQPTDDPLSLLDPLWTLNKT</sequence>
<comment type="function">
    <text evidence="1 9">Plays a role in sorting of endocytic ubiquitinated cargos into multivesicular bodies (MVBs) via its interaction with the ESCRT-I complex (endosomal sorting complex required for transport I), and possibly also other ESCRT complexes. May act as a negative regulator of Ras-mediated mitogenic activity. Plays a role in ciliogenesis (By similarity).</text>
</comment>
<comment type="catalytic activity">
    <reaction evidence="6">
        <text>O-phospho-L-tyrosyl-[protein] + H2O = L-tyrosyl-[protein] + phosphate</text>
        <dbReference type="Rhea" id="RHEA:10684"/>
        <dbReference type="Rhea" id="RHEA-COMP:10136"/>
        <dbReference type="Rhea" id="RHEA-COMP:20101"/>
        <dbReference type="ChEBI" id="CHEBI:15377"/>
        <dbReference type="ChEBI" id="CHEBI:43474"/>
        <dbReference type="ChEBI" id="CHEBI:46858"/>
        <dbReference type="ChEBI" id="CHEBI:61978"/>
        <dbReference type="EC" id="3.1.3.48"/>
    </reaction>
</comment>
<comment type="subunit">
    <text evidence="1">Interacts with GRAP2 and GRB2. Interacts with UBAP1 and CHMP4B (By similarity).</text>
</comment>
<comment type="subcellular location">
    <subcellularLocation>
        <location evidence="1">Nucleus</location>
    </subcellularLocation>
    <subcellularLocation>
        <location evidence="1">Cytoplasm</location>
    </subcellularLocation>
    <subcellularLocation>
        <location evidence="9">Cytoplasmic vesicle</location>
    </subcellularLocation>
    <subcellularLocation>
        <location evidence="1">Endosome</location>
    </subcellularLocation>
    <subcellularLocation>
        <location evidence="1">Cytoplasm</location>
        <location evidence="1">Cytoskeleton</location>
        <location evidence="1">Cilium basal body</location>
    </subcellularLocation>
</comment>
<comment type="tissue specificity">
    <text evidence="8 9">Ubiquitously expressed, with highest levels in brain, testis and kidney, and lowest levels in skeletal muscle.</text>
</comment>
<comment type="similarity">
    <text evidence="10">Belongs to the protein-tyrosine phosphatase family. Non-receptor class subfamily.</text>
</comment>
<comment type="sequence caution" evidence="10">
    <conflict type="erroneous initiation">
        <sequence resource="EMBL-CDS" id="AAC62959"/>
    </conflict>
    <text>Truncated N-terminus.</text>
</comment>
<comment type="sequence caution" evidence="10">
    <conflict type="frameshift">
        <sequence resource="EMBL-CDS" id="AAC62959"/>
    </conflict>
</comment>
<name>PTN23_RAT</name>